<accession>B8HCR6</accession>
<dbReference type="EC" id="4.6.1.12" evidence="1"/>
<dbReference type="EMBL" id="CP001341">
    <property type="protein sequence ID" value="ACL38849.1"/>
    <property type="molecule type" value="Genomic_DNA"/>
</dbReference>
<dbReference type="RefSeq" id="WP_015936073.1">
    <property type="nucleotide sequence ID" value="NC_011886.1"/>
</dbReference>
<dbReference type="SMR" id="B8HCR6"/>
<dbReference type="STRING" id="452863.Achl_0854"/>
<dbReference type="KEGG" id="ach:Achl_0854"/>
<dbReference type="eggNOG" id="COG0245">
    <property type="taxonomic scope" value="Bacteria"/>
</dbReference>
<dbReference type="HOGENOM" id="CLU_084630_1_0_11"/>
<dbReference type="OrthoDB" id="9804336at2"/>
<dbReference type="UniPathway" id="UPA00056">
    <property type="reaction ID" value="UER00095"/>
</dbReference>
<dbReference type="Proteomes" id="UP000002505">
    <property type="component" value="Chromosome"/>
</dbReference>
<dbReference type="GO" id="GO:0008685">
    <property type="term" value="F:2-C-methyl-D-erythritol 2,4-cyclodiphosphate synthase activity"/>
    <property type="evidence" value="ECO:0007669"/>
    <property type="project" value="UniProtKB-UniRule"/>
</dbReference>
<dbReference type="GO" id="GO:0046872">
    <property type="term" value="F:metal ion binding"/>
    <property type="evidence" value="ECO:0007669"/>
    <property type="project" value="UniProtKB-KW"/>
</dbReference>
<dbReference type="GO" id="GO:0019288">
    <property type="term" value="P:isopentenyl diphosphate biosynthetic process, methylerythritol 4-phosphate pathway"/>
    <property type="evidence" value="ECO:0007669"/>
    <property type="project" value="UniProtKB-UniRule"/>
</dbReference>
<dbReference type="GO" id="GO:0016114">
    <property type="term" value="P:terpenoid biosynthetic process"/>
    <property type="evidence" value="ECO:0007669"/>
    <property type="project" value="InterPro"/>
</dbReference>
<dbReference type="CDD" id="cd00554">
    <property type="entry name" value="MECDP_synthase"/>
    <property type="match status" value="1"/>
</dbReference>
<dbReference type="FunFam" id="3.30.1330.50:FF:000003">
    <property type="entry name" value="2-C-methyl-D-erythritol 2,4-cyclodiphosphate synthase"/>
    <property type="match status" value="1"/>
</dbReference>
<dbReference type="Gene3D" id="3.30.1330.50">
    <property type="entry name" value="2-C-methyl-D-erythritol 2,4-cyclodiphosphate synthase"/>
    <property type="match status" value="1"/>
</dbReference>
<dbReference type="HAMAP" id="MF_00107">
    <property type="entry name" value="IspF"/>
    <property type="match status" value="1"/>
</dbReference>
<dbReference type="InterPro" id="IPR003526">
    <property type="entry name" value="MECDP_synthase"/>
</dbReference>
<dbReference type="InterPro" id="IPR020555">
    <property type="entry name" value="MECDP_synthase_CS"/>
</dbReference>
<dbReference type="InterPro" id="IPR036571">
    <property type="entry name" value="MECDP_synthase_sf"/>
</dbReference>
<dbReference type="NCBIfam" id="TIGR00151">
    <property type="entry name" value="ispF"/>
    <property type="match status" value="1"/>
</dbReference>
<dbReference type="PANTHER" id="PTHR43181">
    <property type="entry name" value="2-C-METHYL-D-ERYTHRITOL 2,4-CYCLODIPHOSPHATE SYNTHASE, CHLOROPLASTIC"/>
    <property type="match status" value="1"/>
</dbReference>
<dbReference type="PANTHER" id="PTHR43181:SF1">
    <property type="entry name" value="2-C-METHYL-D-ERYTHRITOL 2,4-CYCLODIPHOSPHATE SYNTHASE, CHLOROPLASTIC"/>
    <property type="match status" value="1"/>
</dbReference>
<dbReference type="Pfam" id="PF02542">
    <property type="entry name" value="YgbB"/>
    <property type="match status" value="1"/>
</dbReference>
<dbReference type="SUPFAM" id="SSF69765">
    <property type="entry name" value="IpsF-like"/>
    <property type="match status" value="1"/>
</dbReference>
<dbReference type="PROSITE" id="PS01350">
    <property type="entry name" value="ISPF"/>
    <property type="match status" value="1"/>
</dbReference>
<keyword id="KW-0414">Isoprene biosynthesis</keyword>
<keyword id="KW-0456">Lyase</keyword>
<keyword id="KW-0479">Metal-binding</keyword>
<protein>
    <recommendedName>
        <fullName evidence="1">2-C-methyl-D-erythritol 2,4-cyclodiphosphate synthase</fullName>
        <shortName evidence="1">MECDP-synthase</shortName>
        <shortName evidence="1">MECPP-synthase</shortName>
        <shortName evidence="1">MECPS</shortName>
        <ecNumber evidence="1">4.6.1.12</ecNumber>
    </recommendedName>
</protein>
<evidence type="ECO:0000255" key="1">
    <source>
        <dbReference type="HAMAP-Rule" id="MF_00107"/>
    </source>
</evidence>
<feature type="chain" id="PRO_1000118990" description="2-C-methyl-D-erythritol 2,4-cyclodiphosphate synthase">
    <location>
        <begin position="1"/>
        <end position="166"/>
    </location>
</feature>
<feature type="binding site" evidence="1">
    <location>
        <begin position="11"/>
        <end position="13"/>
    </location>
    <ligand>
        <name>4-CDP-2-C-methyl-D-erythritol 2-phosphate</name>
        <dbReference type="ChEBI" id="CHEBI:57919"/>
    </ligand>
</feature>
<feature type="binding site" evidence="1">
    <location>
        <position position="11"/>
    </location>
    <ligand>
        <name>a divalent metal cation</name>
        <dbReference type="ChEBI" id="CHEBI:60240"/>
    </ligand>
</feature>
<feature type="binding site" evidence="1">
    <location>
        <position position="13"/>
    </location>
    <ligand>
        <name>a divalent metal cation</name>
        <dbReference type="ChEBI" id="CHEBI:60240"/>
    </ligand>
</feature>
<feature type="binding site" evidence="1">
    <location>
        <begin position="40"/>
        <end position="41"/>
    </location>
    <ligand>
        <name>4-CDP-2-C-methyl-D-erythritol 2-phosphate</name>
        <dbReference type="ChEBI" id="CHEBI:57919"/>
    </ligand>
</feature>
<feature type="binding site" evidence="1">
    <location>
        <position position="48"/>
    </location>
    <ligand>
        <name>a divalent metal cation</name>
        <dbReference type="ChEBI" id="CHEBI:60240"/>
    </ligand>
</feature>
<feature type="binding site" evidence="1">
    <location>
        <begin position="62"/>
        <end position="64"/>
    </location>
    <ligand>
        <name>4-CDP-2-C-methyl-D-erythritol 2-phosphate</name>
        <dbReference type="ChEBI" id="CHEBI:57919"/>
    </ligand>
</feature>
<feature type="binding site" evidence="1">
    <location>
        <begin position="135"/>
        <end position="138"/>
    </location>
    <ligand>
        <name>4-CDP-2-C-methyl-D-erythritol 2-phosphate</name>
        <dbReference type="ChEBI" id="CHEBI:57919"/>
    </ligand>
</feature>
<feature type="binding site" evidence="1">
    <location>
        <position position="142"/>
    </location>
    <ligand>
        <name>4-CDP-2-C-methyl-D-erythritol 2-phosphate</name>
        <dbReference type="ChEBI" id="CHEBI:57919"/>
    </ligand>
</feature>
<feature type="binding site" evidence="1">
    <location>
        <position position="145"/>
    </location>
    <ligand>
        <name>4-CDP-2-C-methyl-D-erythritol 2-phosphate</name>
        <dbReference type="ChEBI" id="CHEBI:57919"/>
    </ligand>
</feature>
<feature type="site" description="Transition state stabilizer" evidence="1">
    <location>
        <position position="40"/>
    </location>
</feature>
<feature type="site" description="Transition state stabilizer" evidence="1">
    <location>
        <position position="136"/>
    </location>
</feature>
<organism>
    <name type="scientific">Pseudarthrobacter chlorophenolicus (strain ATCC 700700 / DSM 12829 / CIP 107037 / JCM 12360 / KCTC 9906 / NCIMB 13794 / A6)</name>
    <name type="common">Arthrobacter chlorophenolicus</name>
    <dbReference type="NCBI Taxonomy" id="452863"/>
    <lineage>
        <taxon>Bacteria</taxon>
        <taxon>Bacillati</taxon>
        <taxon>Actinomycetota</taxon>
        <taxon>Actinomycetes</taxon>
        <taxon>Micrococcales</taxon>
        <taxon>Micrococcaceae</taxon>
        <taxon>Pseudarthrobacter</taxon>
    </lineage>
</organism>
<comment type="function">
    <text evidence="1">Involved in the biosynthesis of isopentenyl diphosphate (IPP) and dimethylallyl diphosphate (DMAPP), two major building blocks of isoprenoid compounds. Catalyzes the conversion of 4-diphosphocytidyl-2-C-methyl-D-erythritol 2-phosphate (CDP-ME2P) to 2-C-methyl-D-erythritol 2,4-cyclodiphosphate (ME-CPP) with a corresponding release of cytidine 5-monophosphate (CMP).</text>
</comment>
<comment type="catalytic activity">
    <reaction evidence="1">
        <text>4-CDP-2-C-methyl-D-erythritol 2-phosphate = 2-C-methyl-D-erythritol 2,4-cyclic diphosphate + CMP</text>
        <dbReference type="Rhea" id="RHEA:23864"/>
        <dbReference type="ChEBI" id="CHEBI:57919"/>
        <dbReference type="ChEBI" id="CHEBI:58483"/>
        <dbReference type="ChEBI" id="CHEBI:60377"/>
        <dbReference type="EC" id="4.6.1.12"/>
    </reaction>
</comment>
<comment type="cofactor">
    <cofactor evidence="1">
        <name>a divalent metal cation</name>
        <dbReference type="ChEBI" id="CHEBI:60240"/>
    </cofactor>
    <text evidence="1">Binds 1 divalent metal cation per subunit.</text>
</comment>
<comment type="pathway">
    <text evidence="1">Isoprenoid biosynthesis; isopentenyl diphosphate biosynthesis via DXP pathway; isopentenyl diphosphate from 1-deoxy-D-xylulose 5-phosphate: step 4/6.</text>
</comment>
<comment type="subunit">
    <text evidence="1">Homotrimer.</text>
</comment>
<comment type="similarity">
    <text evidence="1">Belongs to the IspF family.</text>
</comment>
<name>ISPF_PSECP</name>
<proteinExistence type="inferred from homology"/>
<gene>
    <name evidence="1" type="primary">ispF</name>
    <name type="ordered locus">Achl_0854</name>
</gene>
<reference key="1">
    <citation type="submission" date="2009-01" db="EMBL/GenBank/DDBJ databases">
        <title>Complete sequence of chromosome of Arthrobacter chlorophenolicus A6.</title>
        <authorList>
            <consortium name="US DOE Joint Genome Institute"/>
            <person name="Lucas S."/>
            <person name="Copeland A."/>
            <person name="Lapidus A."/>
            <person name="Glavina del Rio T."/>
            <person name="Tice H."/>
            <person name="Bruce D."/>
            <person name="Goodwin L."/>
            <person name="Pitluck S."/>
            <person name="Goltsman E."/>
            <person name="Clum A."/>
            <person name="Larimer F."/>
            <person name="Land M."/>
            <person name="Hauser L."/>
            <person name="Kyrpides N."/>
            <person name="Mikhailova N."/>
            <person name="Jansson J."/>
            <person name="Richardson P."/>
        </authorList>
    </citation>
    <scope>NUCLEOTIDE SEQUENCE [LARGE SCALE GENOMIC DNA]</scope>
    <source>
        <strain>ATCC 700700 / DSM 12829 / CIP 107037 / JCM 12360 / KCTC 9906 / NCIMB 13794 / A6</strain>
    </source>
</reference>
<sequence>MIIPRTGIGVDVHAFAAEGEARQLWVGGLLWPGERGLAGHSDGDPVAHAAADALFSAAGIGDLGTHFGTDRPEFAGASGVTLLAEAARIVRAAGFEIGNIAVQFVANRPKFGPRREESQQVLSDAAGAPVSVTATTSDGLGFTGRGEGISAVATALVYPRLSESIG</sequence>